<accession>B7LCQ8</accession>
<sequence length="228" mass="25338">MQKLKQQVFEANMDLPRYGLVTFTWGNVSAIDRERGLVVIKPSGVAYETMKADDMVVVDMSGKVVEGEYRPSSDTATHLELYRRYPSLGGIVHTHSTHATAWAQAGLAIPALGTTHADYFFGDIPCTRGLSEEEVQGEYELNTGKVIIETLGNAEPLHTPGIVVYQHGPFAWGKDAHDAVHNAVVMEEVAKMAWIARSINPQLNHIDSFLMNKHFMRKHGPNAYYGQK</sequence>
<dbReference type="EC" id="5.1.3.4" evidence="1"/>
<dbReference type="EMBL" id="CU928145">
    <property type="protein sequence ID" value="CAV01693.1"/>
    <property type="molecule type" value="Genomic_DNA"/>
</dbReference>
<dbReference type="RefSeq" id="WP_001170812.1">
    <property type="nucleotide sequence ID" value="NC_011748.1"/>
</dbReference>
<dbReference type="SMR" id="B7LCQ8"/>
<dbReference type="KEGG" id="eck:EC55989_4755"/>
<dbReference type="HOGENOM" id="CLU_006033_5_0_6"/>
<dbReference type="UniPathway" id="UPA00263">
    <property type="reaction ID" value="UER00380"/>
</dbReference>
<dbReference type="Proteomes" id="UP000000746">
    <property type="component" value="Chromosome"/>
</dbReference>
<dbReference type="GO" id="GO:0005829">
    <property type="term" value="C:cytosol"/>
    <property type="evidence" value="ECO:0007669"/>
    <property type="project" value="TreeGrafter"/>
</dbReference>
<dbReference type="GO" id="GO:0016832">
    <property type="term" value="F:aldehyde-lyase activity"/>
    <property type="evidence" value="ECO:0007669"/>
    <property type="project" value="TreeGrafter"/>
</dbReference>
<dbReference type="GO" id="GO:0008742">
    <property type="term" value="F:L-ribulose-phosphate 4-epimerase activity"/>
    <property type="evidence" value="ECO:0007669"/>
    <property type="project" value="UniProtKB-UniRule"/>
</dbReference>
<dbReference type="GO" id="GO:0008270">
    <property type="term" value="F:zinc ion binding"/>
    <property type="evidence" value="ECO:0007669"/>
    <property type="project" value="UniProtKB-UniRule"/>
</dbReference>
<dbReference type="GO" id="GO:0019854">
    <property type="term" value="P:L-ascorbic acid catabolic process"/>
    <property type="evidence" value="ECO:0007669"/>
    <property type="project" value="UniProtKB-UniRule"/>
</dbReference>
<dbReference type="GO" id="GO:0019323">
    <property type="term" value="P:pentose catabolic process"/>
    <property type="evidence" value="ECO:0007669"/>
    <property type="project" value="TreeGrafter"/>
</dbReference>
<dbReference type="CDD" id="cd00398">
    <property type="entry name" value="Aldolase_II"/>
    <property type="match status" value="1"/>
</dbReference>
<dbReference type="FunFam" id="3.40.225.10:FF:000001">
    <property type="entry name" value="L-ribulose-5-phosphate 4-epimerase UlaF"/>
    <property type="match status" value="1"/>
</dbReference>
<dbReference type="Gene3D" id="3.40.225.10">
    <property type="entry name" value="Class II aldolase/adducin N-terminal domain"/>
    <property type="match status" value="1"/>
</dbReference>
<dbReference type="HAMAP" id="MF_01952">
    <property type="entry name" value="UlaF"/>
    <property type="match status" value="1"/>
</dbReference>
<dbReference type="InterPro" id="IPR050197">
    <property type="entry name" value="Aldolase_class_II_sugar_metab"/>
</dbReference>
<dbReference type="InterPro" id="IPR001303">
    <property type="entry name" value="Aldolase_II/adducin_N"/>
</dbReference>
<dbReference type="InterPro" id="IPR036409">
    <property type="entry name" value="Aldolase_II/adducin_N_sf"/>
</dbReference>
<dbReference type="InterPro" id="IPR023499">
    <property type="entry name" value="UlaF"/>
</dbReference>
<dbReference type="NCBIfam" id="NF006047">
    <property type="entry name" value="PRK08193.1"/>
    <property type="match status" value="1"/>
</dbReference>
<dbReference type="NCBIfam" id="NF009003">
    <property type="entry name" value="PRK12348.1"/>
    <property type="match status" value="1"/>
</dbReference>
<dbReference type="PANTHER" id="PTHR22789">
    <property type="entry name" value="FUCULOSE PHOSPHATE ALDOLASE"/>
    <property type="match status" value="1"/>
</dbReference>
<dbReference type="PANTHER" id="PTHR22789:SF9">
    <property type="entry name" value="L-RIBULOSE-5-PHOSPHATE 4-EPIMERASE ULAF"/>
    <property type="match status" value="1"/>
</dbReference>
<dbReference type="Pfam" id="PF00596">
    <property type="entry name" value="Aldolase_II"/>
    <property type="match status" value="1"/>
</dbReference>
<dbReference type="SMART" id="SM01007">
    <property type="entry name" value="Aldolase_II"/>
    <property type="match status" value="1"/>
</dbReference>
<dbReference type="SUPFAM" id="SSF53639">
    <property type="entry name" value="AraD/HMP-PK domain-like"/>
    <property type="match status" value="1"/>
</dbReference>
<organism>
    <name type="scientific">Escherichia coli (strain 55989 / EAEC)</name>
    <dbReference type="NCBI Taxonomy" id="585055"/>
    <lineage>
        <taxon>Bacteria</taxon>
        <taxon>Pseudomonadati</taxon>
        <taxon>Pseudomonadota</taxon>
        <taxon>Gammaproteobacteria</taxon>
        <taxon>Enterobacterales</taxon>
        <taxon>Enterobacteriaceae</taxon>
        <taxon>Escherichia</taxon>
    </lineage>
</organism>
<evidence type="ECO:0000255" key="1">
    <source>
        <dbReference type="HAMAP-Rule" id="MF_01952"/>
    </source>
</evidence>
<comment type="function">
    <text evidence="1">Catalyzes the isomerization of L-ribulose 5-phosphate to D-xylulose 5-phosphate. Is involved in the anaerobic L-ascorbate utilization.</text>
</comment>
<comment type="catalytic activity">
    <reaction evidence="1">
        <text>L-ribulose 5-phosphate = D-xylulose 5-phosphate</text>
        <dbReference type="Rhea" id="RHEA:22368"/>
        <dbReference type="ChEBI" id="CHEBI:57737"/>
        <dbReference type="ChEBI" id="CHEBI:58226"/>
        <dbReference type="EC" id="5.1.3.4"/>
    </reaction>
</comment>
<comment type="cofactor">
    <cofactor evidence="1">
        <name>Zn(2+)</name>
        <dbReference type="ChEBI" id="CHEBI:29105"/>
    </cofactor>
    <text evidence="1">Binds 1 zinc ion per subunit.</text>
</comment>
<comment type="pathway">
    <text evidence="1">Cofactor degradation; L-ascorbate degradation; D-xylulose 5-phosphate from L-ascorbate: step 4/4.</text>
</comment>
<comment type="induction">
    <text evidence="1">Induced by L-ascorbate. Repressed by UlaR.</text>
</comment>
<comment type="similarity">
    <text evidence="1">Belongs to the aldolase class II family. AraD/FucA subfamily.</text>
</comment>
<keyword id="KW-0119">Carbohydrate metabolism</keyword>
<keyword id="KW-0413">Isomerase</keyword>
<keyword id="KW-0479">Metal-binding</keyword>
<keyword id="KW-1185">Reference proteome</keyword>
<keyword id="KW-0862">Zinc</keyword>
<name>ULAF_ECO55</name>
<proteinExistence type="inferred from homology"/>
<feature type="chain" id="PRO_1000188841" description="L-ribulose-5-phosphate 4-epimerase UlaF">
    <location>
        <begin position="1"/>
        <end position="228"/>
    </location>
</feature>
<feature type="active site" description="Proton donor/acceptor" evidence="1">
    <location>
        <position position="118"/>
    </location>
</feature>
<feature type="active site" description="Proton donor/acceptor" evidence="1">
    <location>
        <position position="225"/>
    </location>
</feature>
<feature type="binding site" evidence="1">
    <location>
        <begin position="26"/>
        <end position="27"/>
    </location>
    <ligand>
        <name>substrate</name>
    </ligand>
</feature>
<feature type="binding site" evidence="1">
    <location>
        <begin position="43"/>
        <end position="44"/>
    </location>
    <ligand>
        <name>substrate</name>
    </ligand>
</feature>
<feature type="binding site" evidence="1">
    <location>
        <begin position="72"/>
        <end position="73"/>
    </location>
    <ligand>
        <name>substrate</name>
    </ligand>
</feature>
<feature type="binding site" evidence="1">
    <location>
        <position position="74"/>
    </location>
    <ligand>
        <name>Zn(2+)</name>
        <dbReference type="ChEBI" id="CHEBI:29105"/>
    </ligand>
</feature>
<feature type="binding site" evidence="1">
    <location>
        <position position="93"/>
    </location>
    <ligand>
        <name>Zn(2+)</name>
        <dbReference type="ChEBI" id="CHEBI:29105"/>
    </ligand>
</feature>
<feature type="binding site" evidence="1">
    <location>
        <position position="95"/>
    </location>
    <ligand>
        <name>Zn(2+)</name>
        <dbReference type="ChEBI" id="CHEBI:29105"/>
    </ligand>
</feature>
<feature type="binding site" evidence="1">
    <location>
        <position position="167"/>
    </location>
    <ligand>
        <name>Zn(2+)</name>
        <dbReference type="ChEBI" id="CHEBI:29105"/>
    </ligand>
</feature>
<gene>
    <name evidence="1" type="primary">ulaF</name>
    <name type="ordered locus">EC55989_4755</name>
</gene>
<protein>
    <recommendedName>
        <fullName evidence="1">L-ribulose-5-phosphate 4-epimerase UlaF</fullName>
        <ecNumber evidence="1">5.1.3.4</ecNumber>
    </recommendedName>
    <alternativeName>
        <fullName evidence="1">L-ascorbate utilization protein F</fullName>
    </alternativeName>
    <alternativeName>
        <fullName evidence="1">Phosphoribulose isomerase</fullName>
    </alternativeName>
</protein>
<reference key="1">
    <citation type="journal article" date="2009" name="PLoS Genet.">
        <title>Organised genome dynamics in the Escherichia coli species results in highly diverse adaptive paths.</title>
        <authorList>
            <person name="Touchon M."/>
            <person name="Hoede C."/>
            <person name="Tenaillon O."/>
            <person name="Barbe V."/>
            <person name="Baeriswyl S."/>
            <person name="Bidet P."/>
            <person name="Bingen E."/>
            <person name="Bonacorsi S."/>
            <person name="Bouchier C."/>
            <person name="Bouvet O."/>
            <person name="Calteau A."/>
            <person name="Chiapello H."/>
            <person name="Clermont O."/>
            <person name="Cruveiller S."/>
            <person name="Danchin A."/>
            <person name="Diard M."/>
            <person name="Dossat C."/>
            <person name="Karoui M.E."/>
            <person name="Frapy E."/>
            <person name="Garry L."/>
            <person name="Ghigo J.M."/>
            <person name="Gilles A.M."/>
            <person name="Johnson J."/>
            <person name="Le Bouguenec C."/>
            <person name="Lescat M."/>
            <person name="Mangenot S."/>
            <person name="Martinez-Jehanne V."/>
            <person name="Matic I."/>
            <person name="Nassif X."/>
            <person name="Oztas S."/>
            <person name="Petit M.A."/>
            <person name="Pichon C."/>
            <person name="Rouy Z."/>
            <person name="Ruf C.S."/>
            <person name="Schneider D."/>
            <person name="Tourret J."/>
            <person name="Vacherie B."/>
            <person name="Vallenet D."/>
            <person name="Medigue C."/>
            <person name="Rocha E.P.C."/>
            <person name="Denamur E."/>
        </authorList>
    </citation>
    <scope>NUCLEOTIDE SEQUENCE [LARGE SCALE GENOMIC DNA]</scope>
    <source>
        <strain>55989 / EAEC</strain>
    </source>
</reference>